<name>Y2662_BACCN</name>
<reference key="1">
    <citation type="journal article" date="2008" name="Chem. Biol. Interact.">
        <title>Extending the Bacillus cereus group genomics to putative food-borne pathogens of different toxicity.</title>
        <authorList>
            <person name="Lapidus A."/>
            <person name="Goltsman E."/>
            <person name="Auger S."/>
            <person name="Galleron N."/>
            <person name="Segurens B."/>
            <person name="Dossat C."/>
            <person name="Land M.L."/>
            <person name="Broussolle V."/>
            <person name="Brillard J."/>
            <person name="Guinebretiere M.-H."/>
            <person name="Sanchis V."/>
            <person name="Nguen-the C."/>
            <person name="Lereclus D."/>
            <person name="Richardson P."/>
            <person name="Wincker P."/>
            <person name="Weissenbach J."/>
            <person name="Ehrlich S.D."/>
            <person name="Sorokin A."/>
        </authorList>
    </citation>
    <scope>NUCLEOTIDE SEQUENCE [LARGE SCALE GENOMIC DNA]</scope>
    <source>
        <strain>DSM 22905 / CIP 110041 / 391-98 / NVH 391-98</strain>
    </source>
</reference>
<gene>
    <name type="ordered locus">Bcer98_2662</name>
</gene>
<dbReference type="EMBL" id="CP000764">
    <property type="protein sequence ID" value="ABS22896.1"/>
    <property type="molecule type" value="Genomic_DNA"/>
</dbReference>
<dbReference type="RefSeq" id="WP_012095115.1">
    <property type="nucleotide sequence ID" value="NC_009674.1"/>
</dbReference>
<dbReference type="SMR" id="A7GRY8"/>
<dbReference type="STRING" id="315749.Bcer98_2662"/>
<dbReference type="GeneID" id="33897917"/>
<dbReference type="KEGG" id="bcy:Bcer98_2662"/>
<dbReference type="eggNOG" id="COG4493">
    <property type="taxonomic scope" value="Bacteria"/>
</dbReference>
<dbReference type="HOGENOM" id="CLU_096059_0_0_9"/>
<dbReference type="OrthoDB" id="9812818at2"/>
<dbReference type="Proteomes" id="UP000002300">
    <property type="component" value="Chromosome"/>
</dbReference>
<dbReference type="Gene3D" id="3.30.930.20">
    <property type="entry name" value="Protein of unknown function DUF1054"/>
    <property type="match status" value="1"/>
</dbReference>
<dbReference type="HAMAP" id="MF_01851">
    <property type="entry name" value="UPF0637"/>
    <property type="match status" value="1"/>
</dbReference>
<dbReference type="InterPro" id="IPR009403">
    <property type="entry name" value="UPF0637"/>
</dbReference>
<dbReference type="InterPro" id="IPR053707">
    <property type="entry name" value="UPF0637_domain_sf"/>
</dbReference>
<dbReference type="Pfam" id="PF06335">
    <property type="entry name" value="DUF1054"/>
    <property type="match status" value="1"/>
</dbReference>
<dbReference type="PIRSF" id="PIRSF021332">
    <property type="entry name" value="DUF1054"/>
    <property type="match status" value="1"/>
</dbReference>
<dbReference type="SUPFAM" id="SSF142913">
    <property type="entry name" value="YktB/PF0168-like"/>
    <property type="match status" value="1"/>
</dbReference>
<proteinExistence type="inferred from homology"/>
<sequence length="208" mass="24000">MTLQTFQSADFAVFSVDGLERRMNAIKTHIQPKLETLGERFSHYLSDQTGEPFFYHVAKHARRKVNPPNDTWVAFSTNKRGYKMLPHFQIGLWGTHAFIYFGLIYECPQKEVAAHALLEHLNDLKTNIPNDFVWSIDHTKPDVLPHNTLEAKDLQKIIERLATVKKAELLVGIHIAPEEFSSMTNEQFQTKIESTIHSLLPLYNICNR</sequence>
<protein>
    <recommendedName>
        <fullName evidence="1">UPF0637 protein Bcer98_2662</fullName>
    </recommendedName>
</protein>
<accession>A7GRY8</accession>
<evidence type="ECO:0000255" key="1">
    <source>
        <dbReference type="HAMAP-Rule" id="MF_01851"/>
    </source>
</evidence>
<organism>
    <name type="scientific">Bacillus cytotoxicus (strain DSM 22905 / CIP 110041 / 391-98 / NVH 391-98)</name>
    <dbReference type="NCBI Taxonomy" id="315749"/>
    <lineage>
        <taxon>Bacteria</taxon>
        <taxon>Bacillati</taxon>
        <taxon>Bacillota</taxon>
        <taxon>Bacilli</taxon>
        <taxon>Bacillales</taxon>
        <taxon>Bacillaceae</taxon>
        <taxon>Bacillus</taxon>
        <taxon>Bacillus cereus group</taxon>
    </lineage>
</organism>
<comment type="similarity">
    <text evidence="1">Belongs to the UPF0637 family.</text>
</comment>
<feature type="chain" id="PRO_0000348293" description="UPF0637 protein Bcer98_2662">
    <location>
        <begin position="1"/>
        <end position="208"/>
    </location>
</feature>